<name>HSP90_THEAN</name>
<evidence type="ECO:0000250" key="1"/>
<evidence type="ECO:0000256" key="2">
    <source>
        <dbReference type="SAM" id="MobiDB-lite"/>
    </source>
</evidence>
<evidence type="ECO:0000305" key="3"/>
<comment type="function">
    <text evidence="1">Molecular chaperone that promotes the maturation, structural maintenance and proper regulation of specific target proteins involved for instance in cell cycle control and signal transduction. Undergoes a functional cycle that is linked to its ATPase activity. This cycle probably induces conformational changes in the client proteins, thereby causing their activation. Interacts dynamically with various co-chaperones that modulate its substrate recognition, ATPase cycle and chaperone function (By similarity).</text>
</comment>
<comment type="subunit">
    <text evidence="1">Homodimer.</text>
</comment>
<comment type="subcellular location">
    <subcellularLocation>
        <location evidence="1">Cytoplasm</location>
    </subcellularLocation>
</comment>
<comment type="domain">
    <text evidence="1">The TPR repeat-binding motif mediates interaction with TPR repeat-containing proteins.</text>
</comment>
<comment type="similarity">
    <text evidence="3">Belongs to the heat shock protein 90 family.</text>
</comment>
<dbReference type="EMBL" id="CR940348">
    <property type="protein sequence ID" value="CAI74741.1"/>
    <property type="molecule type" value="Genomic_DNA"/>
</dbReference>
<dbReference type="RefSeq" id="XP_952473.1">
    <property type="nucleotide sequence ID" value="XM_947380.1"/>
</dbReference>
<dbReference type="SMR" id="Q4UDU8"/>
<dbReference type="FunCoup" id="Q4UDU8">
    <property type="interactions" value="295"/>
</dbReference>
<dbReference type="STRING" id="5874.Q4UDU8"/>
<dbReference type="GeneID" id="3862045"/>
<dbReference type="KEGG" id="tan:TA12105"/>
<dbReference type="VEuPathDB" id="PiroplasmaDB:TA12105"/>
<dbReference type="eggNOG" id="KOG0019">
    <property type="taxonomic scope" value="Eukaryota"/>
</dbReference>
<dbReference type="InParanoid" id="Q4UDU8"/>
<dbReference type="OMA" id="MRRMKEM"/>
<dbReference type="OrthoDB" id="28737at2759"/>
<dbReference type="Proteomes" id="UP000001950">
    <property type="component" value="Chromosome 2"/>
</dbReference>
<dbReference type="GO" id="GO:0005737">
    <property type="term" value="C:cytoplasm"/>
    <property type="evidence" value="ECO:0007669"/>
    <property type="project" value="UniProtKB-SubCell"/>
</dbReference>
<dbReference type="GO" id="GO:0005524">
    <property type="term" value="F:ATP binding"/>
    <property type="evidence" value="ECO:0007669"/>
    <property type="project" value="UniProtKB-KW"/>
</dbReference>
<dbReference type="GO" id="GO:0016887">
    <property type="term" value="F:ATP hydrolysis activity"/>
    <property type="evidence" value="ECO:0007669"/>
    <property type="project" value="InterPro"/>
</dbReference>
<dbReference type="GO" id="GO:0140662">
    <property type="term" value="F:ATP-dependent protein folding chaperone"/>
    <property type="evidence" value="ECO:0007669"/>
    <property type="project" value="InterPro"/>
</dbReference>
<dbReference type="GO" id="GO:0051082">
    <property type="term" value="F:unfolded protein binding"/>
    <property type="evidence" value="ECO:0007669"/>
    <property type="project" value="InterPro"/>
</dbReference>
<dbReference type="CDD" id="cd16927">
    <property type="entry name" value="HATPase_Hsp90-like"/>
    <property type="match status" value="1"/>
</dbReference>
<dbReference type="FunFam" id="1.20.120.790:FF:000001">
    <property type="entry name" value="Heat shock protein 90 alpha"/>
    <property type="match status" value="1"/>
</dbReference>
<dbReference type="FunFam" id="3.30.230.80:FF:000001">
    <property type="entry name" value="Heat shock protein 90 alpha"/>
    <property type="match status" value="1"/>
</dbReference>
<dbReference type="FunFam" id="3.40.50.11260:FF:000001">
    <property type="entry name" value="Heat shock protein 90 alpha"/>
    <property type="match status" value="1"/>
</dbReference>
<dbReference type="FunFam" id="3.30.565.10:FF:000001">
    <property type="entry name" value="Heat shock protein HSP 90-alpha"/>
    <property type="match status" value="1"/>
</dbReference>
<dbReference type="Gene3D" id="3.30.230.80">
    <property type="match status" value="1"/>
</dbReference>
<dbReference type="Gene3D" id="3.40.50.11260">
    <property type="match status" value="1"/>
</dbReference>
<dbReference type="Gene3D" id="1.20.120.790">
    <property type="entry name" value="Heat shock protein 90, C-terminal domain"/>
    <property type="match status" value="1"/>
</dbReference>
<dbReference type="Gene3D" id="3.30.565.10">
    <property type="entry name" value="Histidine kinase-like ATPase, C-terminal domain"/>
    <property type="match status" value="1"/>
</dbReference>
<dbReference type="HAMAP" id="MF_00505">
    <property type="entry name" value="HSP90"/>
    <property type="match status" value="1"/>
</dbReference>
<dbReference type="InterPro" id="IPR036890">
    <property type="entry name" value="HATPase_C_sf"/>
</dbReference>
<dbReference type="InterPro" id="IPR019805">
    <property type="entry name" value="Heat_shock_protein_90_CS"/>
</dbReference>
<dbReference type="InterPro" id="IPR037196">
    <property type="entry name" value="HSP90_C"/>
</dbReference>
<dbReference type="InterPro" id="IPR001404">
    <property type="entry name" value="Hsp90_fam"/>
</dbReference>
<dbReference type="InterPro" id="IPR020575">
    <property type="entry name" value="Hsp90_N"/>
</dbReference>
<dbReference type="InterPro" id="IPR020568">
    <property type="entry name" value="Ribosomal_Su5_D2-typ_SF"/>
</dbReference>
<dbReference type="NCBIfam" id="NF003555">
    <property type="entry name" value="PRK05218.1"/>
    <property type="match status" value="1"/>
</dbReference>
<dbReference type="PANTHER" id="PTHR11528">
    <property type="entry name" value="HEAT SHOCK PROTEIN 90 FAMILY MEMBER"/>
    <property type="match status" value="1"/>
</dbReference>
<dbReference type="Pfam" id="PF13589">
    <property type="entry name" value="HATPase_c_3"/>
    <property type="match status" value="1"/>
</dbReference>
<dbReference type="Pfam" id="PF00183">
    <property type="entry name" value="HSP90"/>
    <property type="match status" value="1"/>
</dbReference>
<dbReference type="PIRSF" id="PIRSF002583">
    <property type="entry name" value="Hsp90"/>
    <property type="match status" value="1"/>
</dbReference>
<dbReference type="PRINTS" id="PR00775">
    <property type="entry name" value="HEATSHOCK90"/>
</dbReference>
<dbReference type="SMART" id="SM00387">
    <property type="entry name" value="HATPase_c"/>
    <property type="match status" value="1"/>
</dbReference>
<dbReference type="SUPFAM" id="SSF55874">
    <property type="entry name" value="ATPase domain of HSP90 chaperone/DNA topoisomerase II/histidine kinase"/>
    <property type="match status" value="1"/>
</dbReference>
<dbReference type="SUPFAM" id="SSF110942">
    <property type="entry name" value="HSP90 C-terminal domain"/>
    <property type="match status" value="1"/>
</dbReference>
<dbReference type="SUPFAM" id="SSF54211">
    <property type="entry name" value="Ribosomal protein S5 domain 2-like"/>
    <property type="match status" value="1"/>
</dbReference>
<dbReference type="PROSITE" id="PS00298">
    <property type="entry name" value="HSP90"/>
    <property type="match status" value="1"/>
</dbReference>
<gene>
    <name type="ORF">TA12105</name>
</gene>
<protein>
    <recommendedName>
        <fullName>Heat shock protein 90</fullName>
        <shortName>HSP90</shortName>
    </recommendedName>
</protein>
<feature type="chain" id="PRO_0000232677" description="Heat shock protein 90">
    <location>
        <begin position="1"/>
        <end position="722"/>
    </location>
</feature>
<feature type="region of interest" description="Disordered" evidence="2">
    <location>
        <begin position="219"/>
        <end position="273"/>
    </location>
</feature>
<feature type="region of interest" description="Disordered" evidence="2">
    <location>
        <begin position="698"/>
        <end position="722"/>
    </location>
</feature>
<feature type="short sequence motif" description="TPR repeat-binding">
    <location>
        <begin position="718"/>
        <end position="722"/>
    </location>
</feature>
<feature type="compositionally biased region" description="Acidic residues" evidence="2">
    <location>
        <begin position="223"/>
        <end position="232"/>
    </location>
</feature>
<feature type="compositionally biased region" description="Basic and acidic residues" evidence="2">
    <location>
        <begin position="233"/>
        <end position="258"/>
    </location>
</feature>
<feature type="binding site" evidence="1">
    <location>
        <position position="44"/>
    </location>
    <ligand>
        <name>ATP</name>
        <dbReference type="ChEBI" id="CHEBI:30616"/>
    </ligand>
</feature>
<feature type="binding site" evidence="1">
    <location>
        <position position="86"/>
    </location>
    <ligand>
        <name>ATP</name>
        <dbReference type="ChEBI" id="CHEBI:30616"/>
    </ligand>
</feature>
<feature type="binding site" evidence="1">
    <location>
        <position position="105"/>
    </location>
    <ligand>
        <name>ATP</name>
        <dbReference type="ChEBI" id="CHEBI:30616"/>
    </ligand>
</feature>
<feature type="binding site" evidence="1">
    <location>
        <position position="131"/>
    </location>
    <ligand>
        <name>ATP</name>
        <dbReference type="ChEBI" id="CHEBI:30616"/>
    </ligand>
</feature>
<feature type="binding site" evidence="1">
    <location>
        <position position="396"/>
    </location>
    <ligand>
        <name>ATP</name>
        <dbReference type="ChEBI" id="CHEBI:30616"/>
    </ligand>
</feature>
<proteinExistence type="inferred from homology"/>
<organism>
    <name type="scientific">Theileria annulata</name>
    <dbReference type="NCBI Taxonomy" id="5874"/>
    <lineage>
        <taxon>Eukaryota</taxon>
        <taxon>Sar</taxon>
        <taxon>Alveolata</taxon>
        <taxon>Apicomplexa</taxon>
        <taxon>Aconoidasida</taxon>
        <taxon>Piroplasmida</taxon>
        <taxon>Theileriidae</taxon>
        <taxon>Theileria</taxon>
    </lineage>
</organism>
<reference key="1">
    <citation type="journal article" date="2005" name="Science">
        <title>Genome of the host-cell transforming parasite Theileria annulata compared with T. parva.</title>
        <authorList>
            <person name="Pain A."/>
            <person name="Renauld H."/>
            <person name="Berriman M."/>
            <person name="Murphy L."/>
            <person name="Yeats C.A."/>
            <person name="Weir W."/>
            <person name="Kerhornou A."/>
            <person name="Aslett M."/>
            <person name="Bishop R."/>
            <person name="Bouchier C."/>
            <person name="Cochet M."/>
            <person name="Coulson R.M.R."/>
            <person name="Cronin A."/>
            <person name="de Villiers E.P."/>
            <person name="Fraser A."/>
            <person name="Fosker N."/>
            <person name="Gardner M."/>
            <person name="Goble A."/>
            <person name="Griffiths-Jones S."/>
            <person name="Harris D.E."/>
            <person name="Katzer F."/>
            <person name="Larke N."/>
            <person name="Lord A."/>
            <person name="Maser P."/>
            <person name="McKellar S."/>
            <person name="Mooney P."/>
            <person name="Morton F."/>
            <person name="Nene V."/>
            <person name="O'Neil S."/>
            <person name="Price C."/>
            <person name="Quail M.A."/>
            <person name="Rabbinowitsch E."/>
            <person name="Rawlings N.D."/>
            <person name="Rutter S."/>
            <person name="Saunders D."/>
            <person name="Seeger K."/>
            <person name="Shah T."/>
            <person name="Squares R."/>
            <person name="Squares S."/>
            <person name="Tivey A."/>
            <person name="Walker A.R."/>
            <person name="Woodward J."/>
            <person name="Dobbelaere D.A.E."/>
            <person name="Langsley G."/>
            <person name="Rajandream M.A."/>
            <person name="McKeever D."/>
            <person name="Shiels B."/>
            <person name="Tait A."/>
            <person name="Barrell B.G."/>
            <person name="Hall N."/>
        </authorList>
    </citation>
    <scope>NUCLEOTIDE SEQUENCE [LARGE SCALE GENOMIC DNA]</scope>
    <source>
        <strain>Ankara</strain>
    </source>
</reference>
<keyword id="KW-0067">ATP-binding</keyword>
<keyword id="KW-0143">Chaperone</keyword>
<keyword id="KW-0963">Cytoplasm</keyword>
<keyword id="KW-0547">Nucleotide-binding</keyword>
<keyword id="KW-1185">Reference proteome</keyword>
<keyword id="KW-0346">Stress response</keyword>
<sequence length="722" mass="83825">MASKEETPDQEVYAFNADISQLLSLIINAFYSNKEIFLRELISNASDALEKIRYEAIKDPKQIEDQPDYYIRLYADKNNNTLTIEDSGIGMTKADLVNNLGTIAKSGTRAFMEALQAGSDMSMIGQFGVGFYSAYLVADKVTVVSKNNADDQYVWESSASGHFTVKRDDSHEPLKRGTRLILHLKEDQTEYLEERRLKELVKKHSEFISFPISLSVEKTQETEVTDDEAEPEEEKKLEEEDKDKEEKVEDVTDEKVTDVTEEEEKKEEKKKKKRKVTNVTREWEMLNKQKPIWMRLPTEVTNEEYASFYKNLTNDWEDHLAVKHFSVEGQLEFKALLFVPRRAPFDMFESRKKKNNIKLYVRRVFIMDDCEELIPEWLSFVKGVVDSEDLPLNISRETLQQNKILKVIRKNLVKKCLELFNELTEKKEDFKKFYEQFSKNLKLGIHEDNANRSKIAELLRFETTKSGDELVSLKEYVDRMKSDQKFVYYITGESKQSVASSPFLETLKARDYEVLYMTDPIDEYAVQQIKEFEGKKLKCCTKEGLELDEGEDEKKSFEALKEEMEPLCKHIKEVLHDKVEKVVCGTRFTDSPCALVTSEFGWSANMERIMKAQALRDSSITSYMLSKKIMEINPRHSIMKELKARAANDKTDKTVKDLVWLLYDTALLTSGFNLDEPTQFGNRIYRMIKLGLSLDDEEHVEDDSSMPPLDEPVVDSKMEEVD</sequence>
<accession>Q4UDU8</accession>